<evidence type="ECO:0000255" key="1">
    <source>
        <dbReference type="HAMAP-Rule" id="MF_00318"/>
    </source>
</evidence>
<gene>
    <name evidence="1" type="primary">eno</name>
    <name type="ordered locus">NMCC_1198</name>
</gene>
<dbReference type="EC" id="4.2.1.11" evidence="1"/>
<dbReference type="EMBL" id="CP000381">
    <property type="protein sequence ID" value="ABX73372.1"/>
    <property type="molecule type" value="Genomic_DNA"/>
</dbReference>
<dbReference type="RefSeq" id="WP_002229530.1">
    <property type="nucleotide sequence ID" value="NC_010120.1"/>
</dbReference>
<dbReference type="SMR" id="A9LZL4"/>
<dbReference type="KEGG" id="nmn:NMCC_1198"/>
<dbReference type="HOGENOM" id="CLU_031223_2_1_4"/>
<dbReference type="UniPathway" id="UPA00109">
    <property type="reaction ID" value="UER00187"/>
</dbReference>
<dbReference type="Proteomes" id="UP000001177">
    <property type="component" value="Chromosome"/>
</dbReference>
<dbReference type="GO" id="GO:0009986">
    <property type="term" value="C:cell surface"/>
    <property type="evidence" value="ECO:0007669"/>
    <property type="project" value="UniProtKB-SubCell"/>
</dbReference>
<dbReference type="GO" id="GO:0005576">
    <property type="term" value="C:extracellular region"/>
    <property type="evidence" value="ECO:0007669"/>
    <property type="project" value="UniProtKB-SubCell"/>
</dbReference>
<dbReference type="GO" id="GO:0000015">
    <property type="term" value="C:phosphopyruvate hydratase complex"/>
    <property type="evidence" value="ECO:0007669"/>
    <property type="project" value="InterPro"/>
</dbReference>
<dbReference type="GO" id="GO:0000287">
    <property type="term" value="F:magnesium ion binding"/>
    <property type="evidence" value="ECO:0007669"/>
    <property type="project" value="UniProtKB-UniRule"/>
</dbReference>
<dbReference type="GO" id="GO:0004634">
    <property type="term" value="F:phosphopyruvate hydratase activity"/>
    <property type="evidence" value="ECO:0007669"/>
    <property type="project" value="UniProtKB-UniRule"/>
</dbReference>
<dbReference type="GO" id="GO:0006096">
    <property type="term" value="P:glycolytic process"/>
    <property type="evidence" value="ECO:0007669"/>
    <property type="project" value="UniProtKB-UniRule"/>
</dbReference>
<dbReference type="CDD" id="cd03313">
    <property type="entry name" value="enolase"/>
    <property type="match status" value="1"/>
</dbReference>
<dbReference type="FunFam" id="3.20.20.120:FF:000001">
    <property type="entry name" value="Enolase"/>
    <property type="match status" value="1"/>
</dbReference>
<dbReference type="FunFam" id="3.30.390.10:FF:000001">
    <property type="entry name" value="Enolase"/>
    <property type="match status" value="1"/>
</dbReference>
<dbReference type="Gene3D" id="3.20.20.120">
    <property type="entry name" value="Enolase-like C-terminal domain"/>
    <property type="match status" value="1"/>
</dbReference>
<dbReference type="Gene3D" id="3.30.390.10">
    <property type="entry name" value="Enolase-like, N-terminal domain"/>
    <property type="match status" value="1"/>
</dbReference>
<dbReference type="HAMAP" id="MF_00318">
    <property type="entry name" value="Enolase"/>
    <property type="match status" value="1"/>
</dbReference>
<dbReference type="InterPro" id="IPR000941">
    <property type="entry name" value="Enolase"/>
</dbReference>
<dbReference type="InterPro" id="IPR036849">
    <property type="entry name" value="Enolase-like_C_sf"/>
</dbReference>
<dbReference type="InterPro" id="IPR029017">
    <property type="entry name" value="Enolase-like_N"/>
</dbReference>
<dbReference type="InterPro" id="IPR020810">
    <property type="entry name" value="Enolase_C"/>
</dbReference>
<dbReference type="InterPro" id="IPR020809">
    <property type="entry name" value="Enolase_CS"/>
</dbReference>
<dbReference type="InterPro" id="IPR020811">
    <property type="entry name" value="Enolase_N"/>
</dbReference>
<dbReference type="NCBIfam" id="TIGR01060">
    <property type="entry name" value="eno"/>
    <property type="match status" value="1"/>
</dbReference>
<dbReference type="PANTHER" id="PTHR11902">
    <property type="entry name" value="ENOLASE"/>
    <property type="match status" value="1"/>
</dbReference>
<dbReference type="PANTHER" id="PTHR11902:SF1">
    <property type="entry name" value="ENOLASE"/>
    <property type="match status" value="1"/>
</dbReference>
<dbReference type="Pfam" id="PF00113">
    <property type="entry name" value="Enolase_C"/>
    <property type="match status" value="1"/>
</dbReference>
<dbReference type="Pfam" id="PF03952">
    <property type="entry name" value="Enolase_N"/>
    <property type="match status" value="1"/>
</dbReference>
<dbReference type="PIRSF" id="PIRSF001400">
    <property type="entry name" value="Enolase"/>
    <property type="match status" value="1"/>
</dbReference>
<dbReference type="PRINTS" id="PR00148">
    <property type="entry name" value="ENOLASE"/>
</dbReference>
<dbReference type="SFLD" id="SFLDF00002">
    <property type="entry name" value="enolase"/>
    <property type="match status" value="1"/>
</dbReference>
<dbReference type="SFLD" id="SFLDG00178">
    <property type="entry name" value="enolase"/>
    <property type="match status" value="1"/>
</dbReference>
<dbReference type="SMART" id="SM01192">
    <property type="entry name" value="Enolase_C"/>
    <property type="match status" value="1"/>
</dbReference>
<dbReference type="SMART" id="SM01193">
    <property type="entry name" value="Enolase_N"/>
    <property type="match status" value="1"/>
</dbReference>
<dbReference type="SUPFAM" id="SSF51604">
    <property type="entry name" value="Enolase C-terminal domain-like"/>
    <property type="match status" value="1"/>
</dbReference>
<dbReference type="SUPFAM" id="SSF54826">
    <property type="entry name" value="Enolase N-terminal domain-like"/>
    <property type="match status" value="1"/>
</dbReference>
<dbReference type="PROSITE" id="PS00164">
    <property type="entry name" value="ENOLASE"/>
    <property type="match status" value="1"/>
</dbReference>
<protein>
    <recommendedName>
        <fullName evidence="1">Enolase</fullName>
        <ecNumber evidence="1">4.2.1.11</ecNumber>
    </recommendedName>
    <alternativeName>
        <fullName evidence="1">2-phospho-D-glycerate hydro-lyase</fullName>
    </alternativeName>
    <alternativeName>
        <fullName evidence="1">2-phosphoglycerate dehydratase</fullName>
    </alternativeName>
</protein>
<organism>
    <name type="scientific">Neisseria meningitidis serogroup C (strain 053442)</name>
    <dbReference type="NCBI Taxonomy" id="374833"/>
    <lineage>
        <taxon>Bacteria</taxon>
        <taxon>Pseudomonadati</taxon>
        <taxon>Pseudomonadota</taxon>
        <taxon>Betaproteobacteria</taxon>
        <taxon>Neisseriales</taxon>
        <taxon>Neisseriaceae</taxon>
        <taxon>Neisseria</taxon>
    </lineage>
</organism>
<feature type="chain" id="PRO_1000079142" description="Enolase">
    <location>
        <begin position="1"/>
        <end position="428"/>
    </location>
</feature>
<feature type="active site" description="Proton donor" evidence="1">
    <location>
        <position position="205"/>
    </location>
</feature>
<feature type="active site" description="Proton acceptor" evidence="1">
    <location>
        <position position="337"/>
    </location>
</feature>
<feature type="binding site" evidence="1">
    <location>
        <position position="163"/>
    </location>
    <ligand>
        <name>(2R)-2-phosphoglycerate</name>
        <dbReference type="ChEBI" id="CHEBI:58289"/>
    </ligand>
</feature>
<feature type="binding site" evidence="1">
    <location>
        <position position="242"/>
    </location>
    <ligand>
        <name>Mg(2+)</name>
        <dbReference type="ChEBI" id="CHEBI:18420"/>
    </ligand>
</feature>
<feature type="binding site" evidence="1">
    <location>
        <position position="285"/>
    </location>
    <ligand>
        <name>Mg(2+)</name>
        <dbReference type="ChEBI" id="CHEBI:18420"/>
    </ligand>
</feature>
<feature type="binding site" evidence="1">
    <location>
        <position position="312"/>
    </location>
    <ligand>
        <name>Mg(2+)</name>
        <dbReference type="ChEBI" id="CHEBI:18420"/>
    </ligand>
</feature>
<feature type="binding site" evidence="1">
    <location>
        <position position="337"/>
    </location>
    <ligand>
        <name>(2R)-2-phosphoglycerate</name>
        <dbReference type="ChEBI" id="CHEBI:58289"/>
    </ligand>
</feature>
<feature type="binding site" evidence="1">
    <location>
        <position position="366"/>
    </location>
    <ligand>
        <name>(2R)-2-phosphoglycerate</name>
        <dbReference type="ChEBI" id="CHEBI:58289"/>
    </ligand>
</feature>
<feature type="binding site" evidence="1">
    <location>
        <position position="367"/>
    </location>
    <ligand>
        <name>(2R)-2-phosphoglycerate</name>
        <dbReference type="ChEBI" id="CHEBI:58289"/>
    </ligand>
</feature>
<feature type="binding site" evidence="1">
    <location>
        <position position="388"/>
    </location>
    <ligand>
        <name>(2R)-2-phosphoglycerate</name>
        <dbReference type="ChEBI" id="CHEBI:58289"/>
    </ligand>
</feature>
<name>ENO_NEIM0</name>
<sequence>MSAIVDIFAREILDSRGNPTVECDVLLESGVMGRAAVPSGASTGQKEALELRDGDKSRYSGKGVLKAVEHVNNQIAQALIGIDANEQSYIDQIMIELDGTENKGNLGANATLAVSMAVARAAAEDSGLPLYRYLGGAGPMSLPVPMMNVINGGEHANNSLNIQEFMIMPVGAKSFREALRCGAEIFHALKKLCDSKGFPTTVGDEGGFAPNLNSHKEALQLMVEATEAAGYKAGEDVLFALDCASSEFYKDGKYHLEAEGRSYTNAEFAEYLESLVNEFPIISIEDGMDENDWEGWKLLTEKLGGKVQLVGDDLFVTNPKILAEGIEKGVANALLVKVNQIGTLSETLKAVDLAKRNRYASVMSHRSGETEDSTIADLAVATNCMQIKTGSLSRSDRMAKYNQLLRIEEELAEAADYPGKAAFYQLGK</sequence>
<comment type="function">
    <text evidence="1">Catalyzes the reversible conversion of 2-phosphoglycerate (2-PG) into phosphoenolpyruvate (PEP). It is essential for the degradation of carbohydrates via glycolysis.</text>
</comment>
<comment type="catalytic activity">
    <reaction evidence="1">
        <text>(2R)-2-phosphoglycerate = phosphoenolpyruvate + H2O</text>
        <dbReference type="Rhea" id="RHEA:10164"/>
        <dbReference type="ChEBI" id="CHEBI:15377"/>
        <dbReference type="ChEBI" id="CHEBI:58289"/>
        <dbReference type="ChEBI" id="CHEBI:58702"/>
        <dbReference type="EC" id="4.2.1.11"/>
    </reaction>
</comment>
<comment type="cofactor">
    <cofactor evidence="1">
        <name>Mg(2+)</name>
        <dbReference type="ChEBI" id="CHEBI:18420"/>
    </cofactor>
    <text evidence="1">Binds a second Mg(2+) ion via substrate during catalysis.</text>
</comment>
<comment type="pathway">
    <text evidence="1">Carbohydrate degradation; glycolysis; pyruvate from D-glyceraldehyde 3-phosphate: step 4/5.</text>
</comment>
<comment type="subcellular location">
    <subcellularLocation>
        <location evidence="1">Cytoplasm</location>
    </subcellularLocation>
    <subcellularLocation>
        <location evidence="1">Secreted</location>
    </subcellularLocation>
    <subcellularLocation>
        <location evidence="1">Cell surface</location>
    </subcellularLocation>
    <text evidence="1">Fractions of enolase are present in both the cytoplasm and on the cell surface.</text>
</comment>
<comment type="similarity">
    <text evidence="1">Belongs to the enolase family.</text>
</comment>
<keyword id="KW-0963">Cytoplasm</keyword>
<keyword id="KW-0324">Glycolysis</keyword>
<keyword id="KW-0456">Lyase</keyword>
<keyword id="KW-0460">Magnesium</keyword>
<keyword id="KW-0479">Metal-binding</keyword>
<keyword id="KW-0964">Secreted</keyword>
<accession>A9LZL4</accession>
<reference key="1">
    <citation type="journal article" date="2008" name="Genomics">
        <title>Characterization of ST-4821 complex, a unique Neisseria meningitidis clone.</title>
        <authorList>
            <person name="Peng J."/>
            <person name="Yang L."/>
            <person name="Yang F."/>
            <person name="Yang J."/>
            <person name="Yan Y."/>
            <person name="Nie H."/>
            <person name="Zhang X."/>
            <person name="Xiong Z."/>
            <person name="Jiang Y."/>
            <person name="Cheng F."/>
            <person name="Xu X."/>
            <person name="Chen S."/>
            <person name="Sun L."/>
            <person name="Li W."/>
            <person name="Shen Y."/>
            <person name="Shao Z."/>
            <person name="Liang X."/>
            <person name="Xu J."/>
            <person name="Jin Q."/>
        </authorList>
    </citation>
    <scope>NUCLEOTIDE SEQUENCE [LARGE SCALE GENOMIC DNA]</scope>
    <source>
        <strain>053442</strain>
    </source>
</reference>
<proteinExistence type="inferred from homology"/>